<accession>B7IWM8</accession>
<keyword id="KW-0001">2Fe-2S</keyword>
<keyword id="KW-0004">4Fe-4S</keyword>
<keyword id="KW-0093">Biotin biosynthesis</keyword>
<keyword id="KW-0408">Iron</keyword>
<keyword id="KW-0411">Iron-sulfur</keyword>
<keyword id="KW-0479">Metal-binding</keyword>
<keyword id="KW-0949">S-adenosyl-L-methionine</keyword>
<keyword id="KW-0808">Transferase</keyword>
<proteinExistence type="inferred from homology"/>
<sequence>MKQVQTKRDWKKLAYDVVEEKMITKEDAIAILEADDTEVLEIMNAAYIIRHHHFGKKVKLNMIINTKSGLCPEDCGYCSQSIISEAPIDKYAWLTQEKIVEGAHEAIRRKAGTYCIVASGRRPTDKEVNHVIGAVKEIRETTDLKICCCLGFLNEDQAGRLAEAGVHRYNHNLNTHANNYDSICSTHTYDDRVDTVQKAKQAGISPCSGAIFGMGETIEERAEIAFELQRIDADSIPCNFLVAVKGTPLEGQKELTPVECLKVLAMMRFVNPTKEIRISGGREINLRSVQPIGLFAANSIFVGDYLTTAGQEPTADWGMIADLGFEIEECAL</sequence>
<dbReference type="EC" id="2.8.1.6" evidence="1"/>
<dbReference type="EMBL" id="CP001186">
    <property type="protein sequence ID" value="ACK94805.1"/>
    <property type="molecule type" value="Genomic_DNA"/>
</dbReference>
<dbReference type="RefSeq" id="WP_000815856.1">
    <property type="nucleotide sequence ID" value="NC_011772.1"/>
</dbReference>
<dbReference type="SMR" id="B7IWM8"/>
<dbReference type="KEGG" id="bcg:BCG9842_B1012"/>
<dbReference type="HOGENOM" id="CLU_033172_2_1_9"/>
<dbReference type="UniPathway" id="UPA00078">
    <property type="reaction ID" value="UER00162"/>
</dbReference>
<dbReference type="Proteomes" id="UP000006744">
    <property type="component" value="Chromosome"/>
</dbReference>
<dbReference type="GO" id="GO:0051537">
    <property type="term" value="F:2 iron, 2 sulfur cluster binding"/>
    <property type="evidence" value="ECO:0007669"/>
    <property type="project" value="UniProtKB-KW"/>
</dbReference>
<dbReference type="GO" id="GO:0051539">
    <property type="term" value="F:4 iron, 4 sulfur cluster binding"/>
    <property type="evidence" value="ECO:0007669"/>
    <property type="project" value="UniProtKB-KW"/>
</dbReference>
<dbReference type="GO" id="GO:0004076">
    <property type="term" value="F:biotin synthase activity"/>
    <property type="evidence" value="ECO:0007669"/>
    <property type="project" value="UniProtKB-UniRule"/>
</dbReference>
<dbReference type="GO" id="GO:0005506">
    <property type="term" value="F:iron ion binding"/>
    <property type="evidence" value="ECO:0007669"/>
    <property type="project" value="UniProtKB-UniRule"/>
</dbReference>
<dbReference type="GO" id="GO:0009102">
    <property type="term" value="P:biotin biosynthetic process"/>
    <property type="evidence" value="ECO:0007669"/>
    <property type="project" value="UniProtKB-UniRule"/>
</dbReference>
<dbReference type="CDD" id="cd01335">
    <property type="entry name" value="Radical_SAM"/>
    <property type="match status" value="1"/>
</dbReference>
<dbReference type="FunFam" id="3.20.20.70:FF:000026">
    <property type="entry name" value="Biotin synthase"/>
    <property type="match status" value="1"/>
</dbReference>
<dbReference type="Gene3D" id="3.20.20.70">
    <property type="entry name" value="Aldolase class I"/>
    <property type="match status" value="1"/>
</dbReference>
<dbReference type="HAMAP" id="MF_01694">
    <property type="entry name" value="BioB"/>
    <property type="match status" value="1"/>
</dbReference>
<dbReference type="InterPro" id="IPR013785">
    <property type="entry name" value="Aldolase_TIM"/>
</dbReference>
<dbReference type="InterPro" id="IPR010722">
    <property type="entry name" value="BATS_dom"/>
</dbReference>
<dbReference type="InterPro" id="IPR002684">
    <property type="entry name" value="Biotin_synth/BioAB"/>
</dbReference>
<dbReference type="InterPro" id="IPR024177">
    <property type="entry name" value="Biotin_synthase"/>
</dbReference>
<dbReference type="InterPro" id="IPR006638">
    <property type="entry name" value="Elp3/MiaA/NifB-like_rSAM"/>
</dbReference>
<dbReference type="InterPro" id="IPR007197">
    <property type="entry name" value="rSAM"/>
</dbReference>
<dbReference type="NCBIfam" id="TIGR00433">
    <property type="entry name" value="bioB"/>
    <property type="match status" value="1"/>
</dbReference>
<dbReference type="PANTHER" id="PTHR22976">
    <property type="entry name" value="BIOTIN SYNTHASE"/>
    <property type="match status" value="1"/>
</dbReference>
<dbReference type="PANTHER" id="PTHR22976:SF2">
    <property type="entry name" value="BIOTIN SYNTHASE, MITOCHONDRIAL"/>
    <property type="match status" value="1"/>
</dbReference>
<dbReference type="Pfam" id="PF06968">
    <property type="entry name" value="BATS"/>
    <property type="match status" value="1"/>
</dbReference>
<dbReference type="Pfam" id="PF04055">
    <property type="entry name" value="Radical_SAM"/>
    <property type="match status" value="1"/>
</dbReference>
<dbReference type="PIRSF" id="PIRSF001619">
    <property type="entry name" value="Biotin_synth"/>
    <property type="match status" value="1"/>
</dbReference>
<dbReference type="SFLD" id="SFLDG01060">
    <property type="entry name" value="BATS_domain_containing"/>
    <property type="match status" value="1"/>
</dbReference>
<dbReference type="SFLD" id="SFLDG01278">
    <property type="entry name" value="biotin_synthase_like"/>
    <property type="match status" value="1"/>
</dbReference>
<dbReference type="SMART" id="SM00876">
    <property type="entry name" value="BATS"/>
    <property type="match status" value="1"/>
</dbReference>
<dbReference type="SMART" id="SM00729">
    <property type="entry name" value="Elp3"/>
    <property type="match status" value="1"/>
</dbReference>
<dbReference type="SUPFAM" id="SSF102114">
    <property type="entry name" value="Radical SAM enzymes"/>
    <property type="match status" value="1"/>
</dbReference>
<dbReference type="PROSITE" id="PS51918">
    <property type="entry name" value="RADICAL_SAM"/>
    <property type="match status" value="1"/>
</dbReference>
<reference key="1">
    <citation type="submission" date="2008-10" db="EMBL/GenBank/DDBJ databases">
        <title>Genome sequence of Bacillus cereus G9842.</title>
        <authorList>
            <person name="Dodson R.J."/>
            <person name="Durkin A.S."/>
            <person name="Rosovitz M.J."/>
            <person name="Rasko D.A."/>
            <person name="Hoffmaster A."/>
            <person name="Ravel J."/>
            <person name="Sutton G."/>
        </authorList>
    </citation>
    <scope>NUCLEOTIDE SEQUENCE [LARGE SCALE GENOMIC DNA]</scope>
    <source>
        <strain>G9842</strain>
    </source>
</reference>
<evidence type="ECO:0000255" key="1">
    <source>
        <dbReference type="HAMAP-Rule" id="MF_01694"/>
    </source>
</evidence>
<evidence type="ECO:0000255" key="2">
    <source>
        <dbReference type="PROSITE-ProRule" id="PRU01266"/>
    </source>
</evidence>
<feature type="chain" id="PRO_0000381220" description="Biotin synthase">
    <location>
        <begin position="1"/>
        <end position="332"/>
    </location>
</feature>
<feature type="domain" description="Radical SAM core" evidence="2">
    <location>
        <begin position="53"/>
        <end position="282"/>
    </location>
</feature>
<feature type="binding site" evidence="1">
    <location>
        <position position="71"/>
    </location>
    <ligand>
        <name>[4Fe-4S] cluster</name>
        <dbReference type="ChEBI" id="CHEBI:49883"/>
        <note>4Fe-4S-S-AdoMet</note>
    </ligand>
</feature>
<feature type="binding site" evidence="1">
    <location>
        <position position="75"/>
    </location>
    <ligand>
        <name>[4Fe-4S] cluster</name>
        <dbReference type="ChEBI" id="CHEBI:49883"/>
        <note>4Fe-4S-S-AdoMet</note>
    </ligand>
</feature>
<feature type="binding site" evidence="1">
    <location>
        <position position="78"/>
    </location>
    <ligand>
        <name>[4Fe-4S] cluster</name>
        <dbReference type="ChEBI" id="CHEBI:49883"/>
        <note>4Fe-4S-S-AdoMet</note>
    </ligand>
</feature>
<feature type="binding site" evidence="1">
    <location>
        <position position="115"/>
    </location>
    <ligand>
        <name>[2Fe-2S] cluster</name>
        <dbReference type="ChEBI" id="CHEBI:190135"/>
    </ligand>
</feature>
<feature type="binding site" evidence="1">
    <location>
        <position position="147"/>
    </location>
    <ligand>
        <name>[2Fe-2S] cluster</name>
        <dbReference type="ChEBI" id="CHEBI:190135"/>
    </ligand>
</feature>
<feature type="binding site" evidence="1">
    <location>
        <position position="207"/>
    </location>
    <ligand>
        <name>[2Fe-2S] cluster</name>
        <dbReference type="ChEBI" id="CHEBI:190135"/>
    </ligand>
</feature>
<feature type="binding site" evidence="1">
    <location>
        <position position="277"/>
    </location>
    <ligand>
        <name>[2Fe-2S] cluster</name>
        <dbReference type="ChEBI" id="CHEBI:190135"/>
    </ligand>
</feature>
<gene>
    <name evidence="1" type="primary">bioB</name>
    <name type="ordered locus">BCG9842_B1012</name>
</gene>
<name>BIOB_BACC2</name>
<protein>
    <recommendedName>
        <fullName evidence="1">Biotin synthase</fullName>
        <ecNumber evidence="1">2.8.1.6</ecNumber>
    </recommendedName>
</protein>
<organism>
    <name type="scientific">Bacillus cereus (strain G9842)</name>
    <dbReference type="NCBI Taxonomy" id="405531"/>
    <lineage>
        <taxon>Bacteria</taxon>
        <taxon>Bacillati</taxon>
        <taxon>Bacillota</taxon>
        <taxon>Bacilli</taxon>
        <taxon>Bacillales</taxon>
        <taxon>Bacillaceae</taxon>
        <taxon>Bacillus</taxon>
        <taxon>Bacillus cereus group</taxon>
    </lineage>
</organism>
<comment type="function">
    <text evidence="1">Catalyzes the conversion of dethiobiotin (DTB) to biotin by the insertion of a sulfur atom into dethiobiotin via a radical-based mechanism.</text>
</comment>
<comment type="catalytic activity">
    <reaction evidence="1">
        <text>(4R,5S)-dethiobiotin + (sulfur carrier)-SH + 2 reduced [2Fe-2S]-[ferredoxin] + 2 S-adenosyl-L-methionine = (sulfur carrier)-H + biotin + 2 5'-deoxyadenosine + 2 L-methionine + 2 oxidized [2Fe-2S]-[ferredoxin]</text>
        <dbReference type="Rhea" id="RHEA:22060"/>
        <dbReference type="Rhea" id="RHEA-COMP:10000"/>
        <dbReference type="Rhea" id="RHEA-COMP:10001"/>
        <dbReference type="Rhea" id="RHEA-COMP:14737"/>
        <dbReference type="Rhea" id="RHEA-COMP:14739"/>
        <dbReference type="ChEBI" id="CHEBI:17319"/>
        <dbReference type="ChEBI" id="CHEBI:29917"/>
        <dbReference type="ChEBI" id="CHEBI:33737"/>
        <dbReference type="ChEBI" id="CHEBI:33738"/>
        <dbReference type="ChEBI" id="CHEBI:57586"/>
        <dbReference type="ChEBI" id="CHEBI:57844"/>
        <dbReference type="ChEBI" id="CHEBI:59789"/>
        <dbReference type="ChEBI" id="CHEBI:64428"/>
        <dbReference type="ChEBI" id="CHEBI:149473"/>
        <dbReference type="EC" id="2.8.1.6"/>
    </reaction>
</comment>
<comment type="cofactor">
    <cofactor evidence="1">
        <name>[4Fe-4S] cluster</name>
        <dbReference type="ChEBI" id="CHEBI:49883"/>
    </cofactor>
    <text evidence="1">Binds 1 [4Fe-4S] cluster. The cluster is coordinated with 3 cysteines and an exchangeable S-adenosyl-L-methionine.</text>
</comment>
<comment type="cofactor">
    <cofactor evidence="1">
        <name>[2Fe-2S] cluster</name>
        <dbReference type="ChEBI" id="CHEBI:190135"/>
    </cofactor>
    <text evidence="1">Binds 1 [2Fe-2S] cluster. The cluster is coordinated with 3 cysteines and 1 arginine.</text>
</comment>
<comment type="pathway">
    <text evidence="1">Cofactor biosynthesis; biotin biosynthesis; biotin from 7,8-diaminononanoate: step 2/2.</text>
</comment>
<comment type="subunit">
    <text evidence="1">Homodimer.</text>
</comment>
<comment type="similarity">
    <text evidence="1">Belongs to the radical SAM superfamily. Biotin synthase family.</text>
</comment>